<name>NADA_MYCTA</name>
<organism>
    <name type="scientific">Mycobacterium tuberculosis (strain ATCC 25177 / H37Ra)</name>
    <dbReference type="NCBI Taxonomy" id="419947"/>
    <lineage>
        <taxon>Bacteria</taxon>
        <taxon>Bacillati</taxon>
        <taxon>Actinomycetota</taxon>
        <taxon>Actinomycetes</taxon>
        <taxon>Mycobacteriales</taxon>
        <taxon>Mycobacteriaceae</taxon>
        <taxon>Mycobacterium</taxon>
        <taxon>Mycobacterium tuberculosis complex</taxon>
    </lineage>
</organism>
<feature type="chain" id="PRO_1000061161" description="Quinolinate synthase">
    <location>
        <begin position="1"/>
        <end position="349"/>
    </location>
</feature>
<feature type="binding site" evidence="1">
    <location>
        <position position="52"/>
    </location>
    <ligand>
        <name>iminosuccinate</name>
        <dbReference type="ChEBI" id="CHEBI:77875"/>
    </ligand>
</feature>
<feature type="binding site" evidence="1">
    <location>
        <position position="69"/>
    </location>
    <ligand>
        <name>iminosuccinate</name>
        <dbReference type="ChEBI" id="CHEBI:77875"/>
    </ligand>
</feature>
<feature type="binding site" evidence="1">
    <location>
        <position position="114"/>
    </location>
    <ligand>
        <name>[4Fe-4S] cluster</name>
        <dbReference type="ChEBI" id="CHEBI:49883"/>
    </ligand>
</feature>
<feature type="binding site" evidence="1">
    <location>
        <begin position="140"/>
        <end position="142"/>
    </location>
    <ligand>
        <name>iminosuccinate</name>
        <dbReference type="ChEBI" id="CHEBI:77875"/>
    </ligand>
</feature>
<feature type="binding site" evidence="1">
    <location>
        <position position="157"/>
    </location>
    <ligand>
        <name>iminosuccinate</name>
        <dbReference type="ChEBI" id="CHEBI:77875"/>
    </ligand>
</feature>
<feature type="binding site" evidence="1">
    <location>
        <position position="201"/>
    </location>
    <ligand>
        <name>[4Fe-4S] cluster</name>
        <dbReference type="ChEBI" id="CHEBI:49883"/>
    </ligand>
</feature>
<feature type="binding site" evidence="1">
    <location>
        <begin position="227"/>
        <end position="229"/>
    </location>
    <ligand>
        <name>iminosuccinate</name>
        <dbReference type="ChEBI" id="CHEBI:77875"/>
    </ligand>
</feature>
<feature type="binding site" evidence="1">
    <location>
        <position position="255"/>
    </location>
    <ligand>
        <name>iminosuccinate</name>
        <dbReference type="ChEBI" id="CHEBI:77875"/>
    </ligand>
</feature>
<feature type="binding site" evidence="1">
    <location>
        <position position="300"/>
    </location>
    <ligand>
        <name>[4Fe-4S] cluster</name>
        <dbReference type="ChEBI" id="CHEBI:49883"/>
    </ligand>
</feature>
<accession>A5U2V0</accession>
<comment type="function">
    <text evidence="1">Catalyzes the condensation of iminoaspartate with dihydroxyacetone phosphate to form quinolinate.</text>
</comment>
<comment type="catalytic activity">
    <reaction evidence="1">
        <text>iminosuccinate + dihydroxyacetone phosphate = quinolinate + phosphate + 2 H2O + H(+)</text>
        <dbReference type="Rhea" id="RHEA:25888"/>
        <dbReference type="ChEBI" id="CHEBI:15377"/>
        <dbReference type="ChEBI" id="CHEBI:15378"/>
        <dbReference type="ChEBI" id="CHEBI:29959"/>
        <dbReference type="ChEBI" id="CHEBI:43474"/>
        <dbReference type="ChEBI" id="CHEBI:57642"/>
        <dbReference type="ChEBI" id="CHEBI:77875"/>
        <dbReference type="EC" id="2.5.1.72"/>
    </reaction>
    <physiologicalReaction direction="left-to-right" evidence="1">
        <dbReference type="Rhea" id="RHEA:25889"/>
    </physiologicalReaction>
</comment>
<comment type="cofactor">
    <cofactor evidence="1">
        <name>[4Fe-4S] cluster</name>
        <dbReference type="ChEBI" id="CHEBI:49883"/>
    </cofactor>
    <text evidence="1">Binds 1 [4Fe-4S] cluster per subunit.</text>
</comment>
<comment type="pathway">
    <text evidence="1">Cofactor biosynthesis; NAD(+) biosynthesis; quinolinate from iminoaspartate: step 1/1.</text>
</comment>
<comment type="subcellular location">
    <subcellularLocation>
        <location evidence="1">Cytoplasm</location>
    </subcellularLocation>
</comment>
<comment type="similarity">
    <text evidence="1">Belongs to the quinolinate synthase family. Type 2 subfamily.</text>
</comment>
<sequence>MTVLNRTDTLVDELTADITNTPLGYGGVDGDERWAAEIRRLAHLRGATVLAHNYQLPAIQDVADHVGDSLALSRVAAEAPEDTIVFCGVHFMAETAKILSPHKTVLIPDQRAGCSLADSITPDELRAWKDEHPGAVVVSYVNTTAAVKALTDICCTSSNAVDVVASIDPDREVLFCPDQFLGAHVRRVTGRKNLHVWAGECHVHAGINGDELADQARAHPDAELFVHPECGCATSALYLAGEGAFPAERVKILSTGGMLEAAHTTRARQVLVATEVGMLHQLRRAAPEVDFRAVNDRASCKYMKMITPAALLRCLVEGADEVHVDPGIAASGRRSVQRMIEIGHPGGGE</sequence>
<evidence type="ECO:0000255" key="1">
    <source>
        <dbReference type="HAMAP-Rule" id="MF_00568"/>
    </source>
</evidence>
<reference key="1">
    <citation type="journal article" date="2008" name="PLoS ONE">
        <title>Genetic basis of virulence attenuation revealed by comparative genomic analysis of Mycobacterium tuberculosis strain H37Ra versus H37Rv.</title>
        <authorList>
            <person name="Zheng H."/>
            <person name="Lu L."/>
            <person name="Wang B."/>
            <person name="Pu S."/>
            <person name="Zhang X."/>
            <person name="Zhu G."/>
            <person name="Shi W."/>
            <person name="Zhang L."/>
            <person name="Wang H."/>
            <person name="Wang S."/>
            <person name="Zhao G."/>
            <person name="Zhang Y."/>
        </authorList>
    </citation>
    <scope>NUCLEOTIDE SEQUENCE [LARGE SCALE GENOMIC DNA]</scope>
    <source>
        <strain>ATCC 25177 / H37Ra</strain>
    </source>
</reference>
<keyword id="KW-0004">4Fe-4S</keyword>
<keyword id="KW-0963">Cytoplasm</keyword>
<keyword id="KW-0408">Iron</keyword>
<keyword id="KW-0411">Iron-sulfur</keyword>
<keyword id="KW-0479">Metal-binding</keyword>
<keyword id="KW-0662">Pyridine nucleotide biosynthesis</keyword>
<keyword id="KW-1185">Reference proteome</keyword>
<keyword id="KW-0808">Transferase</keyword>
<dbReference type="EC" id="2.5.1.72" evidence="1"/>
<dbReference type="EMBL" id="CP000611">
    <property type="protein sequence ID" value="ABQ73350.1"/>
    <property type="molecule type" value="Genomic_DNA"/>
</dbReference>
<dbReference type="RefSeq" id="WP_003407931.1">
    <property type="nucleotide sequence ID" value="NZ_CP016972.1"/>
</dbReference>
<dbReference type="SMR" id="A5U2V0"/>
<dbReference type="GeneID" id="45425562"/>
<dbReference type="KEGG" id="mra:MRA_1604"/>
<dbReference type="eggNOG" id="COG0379">
    <property type="taxonomic scope" value="Bacteria"/>
</dbReference>
<dbReference type="HOGENOM" id="CLU_047382_0_0_11"/>
<dbReference type="UniPathway" id="UPA00253">
    <property type="reaction ID" value="UER00327"/>
</dbReference>
<dbReference type="Proteomes" id="UP000001988">
    <property type="component" value="Chromosome"/>
</dbReference>
<dbReference type="GO" id="GO:0005829">
    <property type="term" value="C:cytosol"/>
    <property type="evidence" value="ECO:0007669"/>
    <property type="project" value="TreeGrafter"/>
</dbReference>
<dbReference type="GO" id="GO:0051539">
    <property type="term" value="F:4 iron, 4 sulfur cluster binding"/>
    <property type="evidence" value="ECO:0007669"/>
    <property type="project" value="UniProtKB-KW"/>
</dbReference>
<dbReference type="GO" id="GO:0046872">
    <property type="term" value="F:metal ion binding"/>
    <property type="evidence" value="ECO:0007669"/>
    <property type="project" value="UniProtKB-KW"/>
</dbReference>
<dbReference type="GO" id="GO:0008987">
    <property type="term" value="F:quinolinate synthetase A activity"/>
    <property type="evidence" value="ECO:0007669"/>
    <property type="project" value="UniProtKB-UniRule"/>
</dbReference>
<dbReference type="GO" id="GO:0034628">
    <property type="term" value="P:'de novo' NAD biosynthetic process from L-aspartate"/>
    <property type="evidence" value="ECO:0007669"/>
    <property type="project" value="TreeGrafter"/>
</dbReference>
<dbReference type="FunFam" id="3.40.50.10800:FF:000007">
    <property type="entry name" value="Quinolinate synthase A"/>
    <property type="match status" value="1"/>
</dbReference>
<dbReference type="Gene3D" id="3.40.50.10800">
    <property type="entry name" value="NadA-like"/>
    <property type="match status" value="3"/>
</dbReference>
<dbReference type="HAMAP" id="MF_00568">
    <property type="entry name" value="NadA_type2"/>
    <property type="match status" value="1"/>
</dbReference>
<dbReference type="InterPro" id="IPR003473">
    <property type="entry name" value="NadA"/>
</dbReference>
<dbReference type="InterPro" id="IPR036094">
    <property type="entry name" value="NadA_sf"/>
</dbReference>
<dbReference type="InterPro" id="IPR023066">
    <property type="entry name" value="Quinolinate_synth_type2"/>
</dbReference>
<dbReference type="NCBIfam" id="TIGR00550">
    <property type="entry name" value="nadA"/>
    <property type="match status" value="1"/>
</dbReference>
<dbReference type="NCBIfam" id="NF006878">
    <property type="entry name" value="PRK09375.1-2"/>
    <property type="match status" value="1"/>
</dbReference>
<dbReference type="NCBIfam" id="NF006879">
    <property type="entry name" value="PRK09375.1-4"/>
    <property type="match status" value="1"/>
</dbReference>
<dbReference type="PANTHER" id="PTHR30573:SF0">
    <property type="entry name" value="QUINOLINATE SYNTHASE, CHLOROPLASTIC"/>
    <property type="match status" value="1"/>
</dbReference>
<dbReference type="PANTHER" id="PTHR30573">
    <property type="entry name" value="QUINOLINATE SYNTHETASE A"/>
    <property type="match status" value="1"/>
</dbReference>
<dbReference type="Pfam" id="PF02445">
    <property type="entry name" value="NadA"/>
    <property type="match status" value="1"/>
</dbReference>
<dbReference type="SUPFAM" id="SSF142754">
    <property type="entry name" value="NadA-like"/>
    <property type="match status" value="1"/>
</dbReference>
<protein>
    <recommendedName>
        <fullName evidence="1">Quinolinate synthase</fullName>
        <ecNumber evidence="1">2.5.1.72</ecNumber>
    </recommendedName>
</protein>
<proteinExistence type="inferred from homology"/>
<gene>
    <name evidence="1" type="primary">nadA</name>
    <name type="ordered locus">MRA_1604</name>
</gene>